<organism>
    <name type="scientific">Lactococcus lactis subsp. lactis (strain IL1403)</name>
    <name type="common">Streptococcus lactis</name>
    <dbReference type="NCBI Taxonomy" id="272623"/>
    <lineage>
        <taxon>Bacteria</taxon>
        <taxon>Bacillati</taxon>
        <taxon>Bacillota</taxon>
        <taxon>Bacilli</taxon>
        <taxon>Lactobacillales</taxon>
        <taxon>Streptococcaceae</taxon>
        <taxon>Lactococcus</taxon>
    </lineage>
</organism>
<accession>Q9CIV8</accession>
<keyword id="KW-0002">3D-structure</keyword>
<keyword id="KW-0319">Glycerol metabolism</keyword>
<keyword id="KW-0418">Kinase</keyword>
<keyword id="KW-1185">Reference proteome</keyword>
<keyword id="KW-0808">Transferase</keyword>
<sequence length="332" mass="36243">MSDEKIINQPQDVVSEMLDGLTYAYGDLIEKVPDFEIIQRKSPKSGKVALVSGGGSGHKPAHAGFVGEGMLSAAVCGAIFTSPTPDQIYEAIKSADEGAGVLLIIKNYLGDVMNFEMAREMAEMEEIKVEQIIVDDDIAVENSLYTQGRRGVAGTVLVHKILGAAAHQEASLDEIKDLADKVVKNIKTIGLALSAATVPEVGKPGFVLDDNEIEYGVGIHSEPGYRREKMKTSYELATELVGKLKEEFKFEAGQKYGILVNGMGATPLMEQFIFMNDVAKLLTEENIEILFKKVGNYMTSIDMAGLSLTMIKLEDDQWLKNLNEDVKTISWG</sequence>
<comment type="function">
    <text evidence="4">Dihydroxyacetone binding subunit of the dihydroxyacetone kinase, which is responsible the phosphoenolpyruvate (PEP)-dependent phosphorylation of dihydroxyacetone via a phosphoryl group transfer from DhaL-ATP.</text>
</comment>
<comment type="catalytic activity">
    <reaction evidence="2">
        <text>dihydroxyacetone + phosphoenolpyruvate = dihydroxyacetone phosphate + pyruvate</text>
        <dbReference type="Rhea" id="RHEA:18381"/>
        <dbReference type="ChEBI" id="CHEBI:15361"/>
        <dbReference type="ChEBI" id="CHEBI:16016"/>
        <dbReference type="ChEBI" id="CHEBI:57642"/>
        <dbReference type="ChEBI" id="CHEBI:58702"/>
        <dbReference type="EC" id="2.7.1.121"/>
    </reaction>
</comment>
<comment type="pathway">
    <text evidence="6">Polyol metabolism; glycerol degradation.</text>
</comment>
<comment type="subunit">
    <text evidence="4">Homodimer. The dihydroxyacetone kinase complex is composed of a homodimer of DhaM, a homodimer of DhaK and the subunit DhaL.</text>
</comment>
<comment type="induction">
    <text evidence="7">Induced by dihydroxyacetone via the DhaQ-DhaS complex.</text>
</comment>
<comment type="sequence caution" evidence="6">
    <conflict type="erroneous initiation">
        <sequence resource="EMBL-CDS" id="AAK04346"/>
    </conflict>
    <text>Truncated N-terminus.</text>
</comment>
<gene>
    <name evidence="5" type="primary">dhaK</name>
    <name type="ordered locus">LL0248</name>
    <name type="ORF">L45677</name>
</gene>
<evidence type="ECO:0000250" key="1">
    <source>
        <dbReference type="UniProtKB" id="P76015"/>
    </source>
</evidence>
<evidence type="ECO:0000250" key="2">
    <source>
        <dbReference type="UniProtKB" id="Q92EU2"/>
    </source>
</evidence>
<evidence type="ECO:0000255" key="3">
    <source>
        <dbReference type="PROSITE-ProRule" id="PRU00814"/>
    </source>
</evidence>
<evidence type="ECO:0000269" key="4">
    <source>
    </source>
</evidence>
<evidence type="ECO:0000303" key="5">
    <source>
    </source>
</evidence>
<evidence type="ECO:0000305" key="6"/>
<evidence type="ECO:0000305" key="7">
    <source>
    </source>
</evidence>
<evidence type="ECO:0007744" key="8">
    <source>
        <dbReference type="PDB" id="3CT4"/>
    </source>
</evidence>
<evidence type="ECO:0007829" key="9">
    <source>
        <dbReference type="PDB" id="3CT4"/>
    </source>
</evidence>
<reference key="1">
    <citation type="journal article" date="2001" name="Genome Res.">
        <title>The complete genome sequence of the lactic acid bacterium Lactococcus lactis ssp. lactis IL1403.</title>
        <authorList>
            <person name="Bolotin A."/>
            <person name="Wincker P."/>
            <person name="Mauger S."/>
            <person name="Jaillon O."/>
            <person name="Malarme K."/>
            <person name="Weissenbach J."/>
            <person name="Ehrlich S.D."/>
            <person name="Sorokin A."/>
        </authorList>
    </citation>
    <scope>NUCLEOTIDE SEQUENCE [LARGE SCALE GENOMIC DNA]</scope>
    <source>
        <strain>IL1403</strain>
    </source>
</reference>
<reference key="2">
    <citation type="journal article" date="2008" name="J. Biol. Chem.">
        <title>X-ray structures of the three Lactococcus lactis dihydroxyacetone kinase subunits and of a transient intersubunit complex.</title>
        <authorList>
            <person name="Zurbriggen A."/>
            <person name="Jeckelmann J.M."/>
            <person name="Christen S."/>
            <person name="Bieniossek C."/>
            <person name="Baumann U."/>
            <person name="Erni B."/>
        </authorList>
    </citation>
    <scope>X-RAY CRYSTALLOGRAPHY (2.5 ANGSTROMS) IN COMPLEX WITH DIHYDROXYACETONE</scope>
    <scope>FUNCTION</scope>
    <scope>SUBUNIT</scope>
    <scope>ACTIVE SITE</scope>
    <scope>INDUCTION</scope>
</reference>
<feature type="chain" id="PRO_0000270534" description="PTS-dependent dihydroxyacetone kinase, dihydroxyacetone-binding subunit DhaK">
    <location>
        <begin position="1"/>
        <end position="332"/>
    </location>
</feature>
<feature type="domain" description="DhaK" evidence="3">
    <location>
        <begin position="9"/>
        <end position="331"/>
    </location>
</feature>
<feature type="active site" description="Proton acceptor" evidence="1">
    <location>
        <position position="58"/>
    </location>
</feature>
<feature type="active site" description="Tele-hemiaminal-histidine intermediate" evidence="3 4 8">
    <location>
        <position position="220"/>
    </location>
</feature>
<feature type="binding site" evidence="4 8">
    <location>
        <begin position="55"/>
        <end position="58"/>
    </location>
    <ligand>
        <name>dihydroxyacetone</name>
        <dbReference type="ChEBI" id="CHEBI:16016"/>
    </ligand>
</feature>
<feature type="binding site" evidence="4 8">
    <location>
        <position position="106"/>
    </location>
    <ligand>
        <name>dihydroxyacetone</name>
        <dbReference type="ChEBI" id="CHEBI:16016"/>
    </ligand>
</feature>
<feature type="binding site" evidence="3 4 8">
    <location>
        <position position="111"/>
    </location>
    <ligand>
        <name>dihydroxyacetone</name>
        <dbReference type="ChEBI" id="CHEBI:16016"/>
    </ligand>
</feature>
<feature type="helix" evidence="9">
    <location>
        <begin position="10"/>
        <end position="12"/>
    </location>
</feature>
<feature type="helix" evidence="9">
    <location>
        <begin position="13"/>
        <end position="24"/>
    </location>
</feature>
<feature type="turn" evidence="9">
    <location>
        <begin position="25"/>
        <end position="27"/>
    </location>
</feature>
<feature type="strand" evidence="9">
    <location>
        <begin position="28"/>
        <end position="31"/>
    </location>
</feature>
<feature type="helix" evidence="9">
    <location>
        <begin position="32"/>
        <end position="34"/>
    </location>
</feature>
<feature type="strand" evidence="9">
    <location>
        <begin position="37"/>
        <end position="40"/>
    </location>
</feature>
<feature type="strand" evidence="9">
    <location>
        <begin position="49"/>
        <end position="58"/>
    </location>
</feature>
<feature type="turn" evidence="9">
    <location>
        <begin position="59"/>
        <end position="62"/>
    </location>
</feature>
<feature type="helix" evidence="9">
    <location>
        <begin position="63"/>
        <end position="65"/>
    </location>
</feature>
<feature type="strand" evidence="9">
    <location>
        <begin position="66"/>
        <end position="68"/>
    </location>
</feature>
<feature type="strand" evidence="9">
    <location>
        <begin position="70"/>
        <end position="79"/>
    </location>
</feature>
<feature type="helix" evidence="9">
    <location>
        <begin position="85"/>
        <end position="95"/>
    </location>
</feature>
<feature type="strand" evidence="9">
    <location>
        <begin position="101"/>
        <end position="107"/>
    </location>
</feature>
<feature type="helix" evidence="9">
    <location>
        <begin position="109"/>
        <end position="124"/>
    </location>
</feature>
<feature type="strand" evidence="9">
    <location>
        <begin position="129"/>
        <end position="134"/>
    </location>
</feature>
<feature type="strand" evidence="9">
    <location>
        <begin position="139"/>
        <end position="142"/>
    </location>
</feature>
<feature type="strand" evidence="9">
    <location>
        <begin position="147"/>
        <end position="149"/>
    </location>
</feature>
<feature type="helix" evidence="9">
    <location>
        <begin position="155"/>
        <end position="167"/>
    </location>
</feature>
<feature type="helix" evidence="9">
    <location>
        <begin position="172"/>
        <end position="183"/>
    </location>
</feature>
<feature type="strand" evidence="9">
    <location>
        <begin position="186"/>
        <end position="194"/>
    </location>
</feature>
<feature type="strand" evidence="9">
    <location>
        <begin position="212"/>
        <end position="215"/>
    </location>
</feature>
<feature type="strand" evidence="9">
    <location>
        <begin position="225"/>
        <end position="229"/>
    </location>
</feature>
<feature type="helix" evidence="9">
    <location>
        <begin position="233"/>
        <end position="248"/>
    </location>
</feature>
<feature type="strand" evidence="9">
    <location>
        <begin position="255"/>
        <end position="262"/>
    </location>
</feature>
<feature type="strand" evidence="9">
    <location>
        <begin position="264"/>
        <end position="266"/>
    </location>
</feature>
<feature type="helix" evidence="9">
    <location>
        <begin position="268"/>
        <end position="283"/>
    </location>
</feature>
<feature type="strand" evidence="9">
    <location>
        <begin position="288"/>
        <end position="295"/>
    </location>
</feature>
<feature type="strand" evidence="9">
    <location>
        <begin position="305"/>
        <end position="312"/>
    </location>
</feature>
<feature type="helix" evidence="9">
    <location>
        <begin position="316"/>
        <end position="322"/>
    </location>
</feature>
<dbReference type="EC" id="2.7.1.121" evidence="2"/>
<dbReference type="EMBL" id="AE005176">
    <property type="protein sequence ID" value="AAK04346.1"/>
    <property type="status" value="ALT_INIT"/>
    <property type="molecule type" value="Genomic_DNA"/>
</dbReference>
<dbReference type="PIR" id="H86655">
    <property type="entry name" value="H86655"/>
</dbReference>
<dbReference type="RefSeq" id="NP_266404.2">
    <property type="nucleotide sequence ID" value="NC_002662.1"/>
</dbReference>
<dbReference type="RefSeq" id="WP_010905235.1">
    <property type="nucleotide sequence ID" value="NC_002662.1"/>
</dbReference>
<dbReference type="PDB" id="3CT4">
    <property type="method" value="X-ray"/>
    <property type="resolution" value="2.50 A"/>
    <property type="chains" value="A/B/C=1-332"/>
</dbReference>
<dbReference type="PDBsum" id="3CT4"/>
<dbReference type="SMR" id="Q9CIV8"/>
<dbReference type="PaxDb" id="272623-L45677"/>
<dbReference type="EnsemblBacteria" id="AAK04346">
    <property type="protein sequence ID" value="AAK04346"/>
    <property type="gene ID" value="L45677"/>
</dbReference>
<dbReference type="KEGG" id="lla:L45677"/>
<dbReference type="PATRIC" id="fig|272623.7.peg.273"/>
<dbReference type="eggNOG" id="COG2376">
    <property type="taxonomic scope" value="Bacteria"/>
</dbReference>
<dbReference type="HOGENOM" id="CLU_017054_0_0_9"/>
<dbReference type="OrthoDB" id="9806345at2"/>
<dbReference type="UniPathway" id="UPA00616"/>
<dbReference type="EvolutionaryTrace" id="Q9CIV8"/>
<dbReference type="Proteomes" id="UP000002196">
    <property type="component" value="Chromosome"/>
</dbReference>
<dbReference type="GO" id="GO:0005829">
    <property type="term" value="C:cytosol"/>
    <property type="evidence" value="ECO:0007669"/>
    <property type="project" value="TreeGrafter"/>
</dbReference>
<dbReference type="GO" id="GO:0004371">
    <property type="term" value="F:glycerone kinase activity"/>
    <property type="evidence" value="ECO:0007669"/>
    <property type="project" value="InterPro"/>
</dbReference>
<dbReference type="GO" id="GO:0047324">
    <property type="term" value="F:phosphoenolpyruvate-glycerone phosphotransferase activity"/>
    <property type="evidence" value="ECO:0000250"/>
    <property type="project" value="UniProtKB"/>
</dbReference>
<dbReference type="GO" id="GO:0019563">
    <property type="term" value="P:glycerol catabolic process"/>
    <property type="evidence" value="ECO:0007669"/>
    <property type="project" value="UniProtKB-UniPathway"/>
</dbReference>
<dbReference type="FunFam" id="3.30.1180.20:FF:000002">
    <property type="entry name" value="Dihydroxyacetone kinase subunit DhaK"/>
    <property type="match status" value="1"/>
</dbReference>
<dbReference type="FunFam" id="3.40.50.10440:FF:000001">
    <property type="entry name" value="Dihydroxyacetone kinase, DhaK subunit"/>
    <property type="match status" value="1"/>
</dbReference>
<dbReference type="Gene3D" id="3.40.50.10440">
    <property type="entry name" value="Dihydroxyacetone kinase, domain 1"/>
    <property type="match status" value="1"/>
</dbReference>
<dbReference type="Gene3D" id="3.30.1180.20">
    <property type="entry name" value="Dihydroxyacetone kinase, domain 2"/>
    <property type="match status" value="1"/>
</dbReference>
<dbReference type="InterPro" id="IPR012736">
    <property type="entry name" value="DhaK_1"/>
</dbReference>
<dbReference type="InterPro" id="IPR004006">
    <property type="entry name" value="DhaK_dom"/>
</dbReference>
<dbReference type="InterPro" id="IPR050861">
    <property type="entry name" value="Dihydroxyacetone_Kinase"/>
</dbReference>
<dbReference type="NCBIfam" id="TIGR02363">
    <property type="entry name" value="dhaK1"/>
    <property type="match status" value="1"/>
</dbReference>
<dbReference type="PANTHER" id="PTHR28629">
    <property type="entry name" value="TRIOKINASE/FMN CYCLASE"/>
    <property type="match status" value="1"/>
</dbReference>
<dbReference type="PANTHER" id="PTHR28629:SF4">
    <property type="entry name" value="TRIOKINASE_FMN CYCLASE"/>
    <property type="match status" value="1"/>
</dbReference>
<dbReference type="Pfam" id="PF02733">
    <property type="entry name" value="Dak1"/>
    <property type="match status" value="1"/>
</dbReference>
<dbReference type="SUPFAM" id="SSF82549">
    <property type="entry name" value="DAK1/DegV-like"/>
    <property type="match status" value="1"/>
</dbReference>
<dbReference type="PROSITE" id="PS51481">
    <property type="entry name" value="DHAK"/>
    <property type="match status" value="1"/>
</dbReference>
<protein>
    <recommendedName>
        <fullName evidence="5">PTS-dependent dihydroxyacetone kinase, dihydroxyacetone-binding subunit DhaK</fullName>
        <ecNumber evidence="2">2.7.1.121</ecNumber>
    </recommendedName>
</protein>
<proteinExistence type="evidence at protein level"/>
<name>DHAK_LACLA</name>